<gene>
    <name evidence="1" type="primary">moaC</name>
    <name type="ordered locus">Rpic_0481</name>
</gene>
<reference key="1">
    <citation type="submission" date="2008-05" db="EMBL/GenBank/DDBJ databases">
        <title>Complete sequence of chromosome 1 of Ralstonia pickettii 12J.</title>
        <authorList>
            <person name="Lucas S."/>
            <person name="Copeland A."/>
            <person name="Lapidus A."/>
            <person name="Glavina del Rio T."/>
            <person name="Dalin E."/>
            <person name="Tice H."/>
            <person name="Bruce D."/>
            <person name="Goodwin L."/>
            <person name="Pitluck S."/>
            <person name="Meincke L."/>
            <person name="Brettin T."/>
            <person name="Detter J.C."/>
            <person name="Han C."/>
            <person name="Kuske C.R."/>
            <person name="Schmutz J."/>
            <person name="Larimer F."/>
            <person name="Land M."/>
            <person name="Hauser L."/>
            <person name="Kyrpides N."/>
            <person name="Mikhailova N."/>
            <person name="Marsh T."/>
            <person name="Richardson P."/>
        </authorList>
    </citation>
    <scope>NUCLEOTIDE SEQUENCE [LARGE SCALE GENOMIC DNA]</scope>
    <source>
        <strain>12J</strain>
    </source>
</reference>
<organism>
    <name type="scientific">Ralstonia pickettii (strain 12J)</name>
    <dbReference type="NCBI Taxonomy" id="402626"/>
    <lineage>
        <taxon>Bacteria</taxon>
        <taxon>Pseudomonadati</taxon>
        <taxon>Pseudomonadota</taxon>
        <taxon>Betaproteobacteria</taxon>
        <taxon>Burkholderiales</taxon>
        <taxon>Burkholderiaceae</taxon>
        <taxon>Ralstonia</taxon>
    </lineage>
</organism>
<sequence>MSQLTHFDSAGQAHMVDVGDKAVTHRVAVATGTIRMLPETFALVRDGNAKKGDVLGIARVAAIQGSKRTSDLIPLCHPLALTKVAVEFELNEAGHSVRCTVRAETRGQTGVEMEALTAVQVGLLTIYDMCKAVDRGMVIGDVRLMEKRGGKSGDWVAD</sequence>
<feature type="chain" id="PRO_1000139287" description="Cyclic pyranopterin monophosphate synthase">
    <location>
        <begin position="1"/>
        <end position="158"/>
    </location>
</feature>
<feature type="active site" evidence="1">
    <location>
        <position position="128"/>
    </location>
</feature>
<feature type="binding site" evidence="1">
    <location>
        <begin position="75"/>
        <end position="77"/>
    </location>
    <ligand>
        <name>substrate</name>
    </ligand>
</feature>
<feature type="binding site" evidence="1">
    <location>
        <begin position="113"/>
        <end position="114"/>
    </location>
    <ligand>
        <name>substrate</name>
    </ligand>
</feature>
<proteinExistence type="inferred from homology"/>
<accession>B2UGE9</accession>
<name>MOAC_RALPJ</name>
<comment type="function">
    <text evidence="1">Catalyzes the conversion of (8S)-3',8-cyclo-7,8-dihydroguanosine 5'-triphosphate to cyclic pyranopterin monophosphate (cPMP).</text>
</comment>
<comment type="catalytic activity">
    <reaction evidence="1">
        <text>(8S)-3',8-cyclo-7,8-dihydroguanosine 5'-triphosphate = cyclic pyranopterin phosphate + diphosphate</text>
        <dbReference type="Rhea" id="RHEA:49580"/>
        <dbReference type="ChEBI" id="CHEBI:33019"/>
        <dbReference type="ChEBI" id="CHEBI:59648"/>
        <dbReference type="ChEBI" id="CHEBI:131766"/>
        <dbReference type="EC" id="4.6.1.17"/>
    </reaction>
</comment>
<comment type="pathway">
    <text evidence="1">Cofactor biosynthesis; molybdopterin biosynthesis.</text>
</comment>
<comment type="subunit">
    <text evidence="1">Homohexamer; trimer of dimers.</text>
</comment>
<comment type="similarity">
    <text evidence="1">Belongs to the MoaC family.</text>
</comment>
<evidence type="ECO:0000255" key="1">
    <source>
        <dbReference type="HAMAP-Rule" id="MF_01224"/>
    </source>
</evidence>
<dbReference type="EC" id="4.6.1.17" evidence="1"/>
<dbReference type="EMBL" id="CP001068">
    <property type="protein sequence ID" value="ACD25636.1"/>
    <property type="molecule type" value="Genomic_DNA"/>
</dbReference>
<dbReference type="SMR" id="B2UGE9"/>
<dbReference type="STRING" id="402626.Rpic_0481"/>
<dbReference type="KEGG" id="rpi:Rpic_0481"/>
<dbReference type="PATRIC" id="fig|402626.5.peg.1687"/>
<dbReference type="eggNOG" id="COG0315">
    <property type="taxonomic scope" value="Bacteria"/>
</dbReference>
<dbReference type="HOGENOM" id="CLU_074693_1_1_4"/>
<dbReference type="UniPathway" id="UPA00344"/>
<dbReference type="GO" id="GO:0061799">
    <property type="term" value="F:cyclic pyranopterin monophosphate synthase activity"/>
    <property type="evidence" value="ECO:0007669"/>
    <property type="project" value="UniProtKB-UniRule"/>
</dbReference>
<dbReference type="GO" id="GO:0006777">
    <property type="term" value="P:Mo-molybdopterin cofactor biosynthetic process"/>
    <property type="evidence" value="ECO:0007669"/>
    <property type="project" value="UniProtKB-UniRule"/>
</dbReference>
<dbReference type="CDD" id="cd01420">
    <property type="entry name" value="MoaC_PE"/>
    <property type="match status" value="1"/>
</dbReference>
<dbReference type="Gene3D" id="3.30.70.640">
    <property type="entry name" value="Molybdopterin cofactor biosynthesis C (MoaC) domain"/>
    <property type="match status" value="1"/>
</dbReference>
<dbReference type="HAMAP" id="MF_01224_B">
    <property type="entry name" value="MoaC_B"/>
    <property type="match status" value="1"/>
</dbReference>
<dbReference type="InterPro" id="IPR023045">
    <property type="entry name" value="MoaC"/>
</dbReference>
<dbReference type="InterPro" id="IPR047594">
    <property type="entry name" value="MoaC_bact/euk"/>
</dbReference>
<dbReference type="InterPro" id="IPR036522">
    <property type="entry name" value="MoaC_sf"/>
</dbReference>
<dbReference type="InterPro" id="IPR050105">
    <property type="entry name" value="MoCo_biosynth_MoaA/MoaC"/>
</dbReference>
<dbReference type="InterPro" id="IPR002820">
    <property type="entry name" value="Mopterin_CF_biosynth-C_dom"/>
</dbReference>
<dbReference type="NCBIfam" id="TIGR00581">
    <property type="entry name" value="moaC"/>
    <property type="match status" value="1"/>
</dbReference>
<dbReference type="NCBIfam" id="NF006870">
    <property type="entry name" value="PRK09364.1"/>
    <property type="match status" value="1"/>
</dbReference>
<dbReference type="PANTHER" id="PTHR22960">
    <property type="entry name" value="MOLYBDOPTERIN COFACTOR SYNTHESIS PROTEIN A"/>
    <property type="match status" value="1"/>
</dbReference>
<dbReference type="Pfam" id="PF01967">
    <property type="entry name" value="MoaC"/>
    <property type="match status" value="1"/>
</dbReference>
<dbReference type="SUPFAM" id="SSF55040">
    <property type="entry name" value="Molybdenum cofactor biosynthesis protein C, MoaC"/>
    <property type="match status" value="1"/>
</dbReference>
<protein>
    <recommendedName>
        <fullName evidence="1">Cyclic pyranopterin monophosphate synthase</fullName>
        <ecNumber evidence="1">4.6.1.17</ecNumber>
    </recommendedName>
    <alternativeName>
        <fullName evidence="1">Molybdenum cofactor biosynthesis protein C</fullName>
    </alternativeName>
</protein>
<keyword id="KW-0456">Lyase</keyword>
<keyword id="KW-0501">Molybdenum cofactor biosynthesis</keyword>